<sequence>MRSSLAPGVWFFRAFSRDSWFRGLILLLTFLIYACYHMSRKPISIVKSRLHQNCSEQIKPINDTHSLNDTMWCSWAPFDKDNYKELLGGVDNAFLIAYAIGMFISGVFGERLPLRYYLSAGMLLSGLFTSLFGLGYFWNIHELWYFVVIQVCNGLVQTTGWPSVVTCVGNWFGKGKRGFIMGIWNSHTSVGNILGSLIAGIWVNGQWGLSFIVPGIITAVMGVITFLFLIEHPEDVDCAPPQHHGEPAENQDNPEDPGNSPCSIRESGLETVAKCSKGPCEEPAAISFFGALRIPGVVEFSLCLLFAKLVSYTFLYWLPLYIANVAHFSAKEAGDLSTLFDVGGIIGGIVAGLVSDYTNGRATTCCVMLILAAPMMFLYNYIGQDGIASSIVMLIICGGLVNGPYALITTAVSADLGTHKSLKGNAKALSTVTAIIDGTGSIGAALGPLLAGLISPTGWNNVFYMLISADVLACLLLCRLVYKEILAWKVSLSRGSGYKEI</sequence>
<comment type="function">
    <text evidence="3">Inorganic phosphate and glucose-6-phosphate antiporter. May transport cytoplasmic glucose-6-phosphate into the lumen of the endoplasmic reticulum and translocate inorganic phosphate into the opposite direction. Independent of a lumenal glucose-6-phosphatase. May not play a role in homeostatic regulation of blood glucose levels.</text>
</comment>
<comment type="catalytic activity">
    <reaction evidence="3">
        <text>D-glucose 6-phosphate(in) + phosphate(out) = D-glucose 6-phosphate(out) + phosphate(in)</text>
        <dbReference type="Rhea" id="RHEA:71535"/>
        <dbReference type="ChEBI" id="CHEBI:43474"/>
        <dbReference type="ChEBI" id="CHEBI:61548"/>
    </reaction>
</comment>
<comment type="activity regulation">
    <text evidence="3">Inhibited by vanadate but not by chlorogenic acid.</text>
</comment>
<comment type="subcellular location">
    <subcellularLocation>
        <location evidence="3">Endoplasmic reticulum membrane</location>
        <topology evidence="1">Multi-pass membrane protein</topology>
    </subcellularLocation>
</comment>
<comment type="alternative products">
    <event type="alternative splicing"/>
    <isoform>
        <id>Q8TED4-1</id>
        <name>1</name>
        <sequence type="displayed"/>
    </isoform>
    <isoform>
        <id>Q8TED4-2</id>
        <name>2</name>
        <sequence type="described" ref="VSP_028963"/>
    </isoform>
    <isoform>
        <id>Q8TED4-3</id>
        <name>3</name>
        <sequence type="described" ref="VSP_028961 VSP_028962"/>
    </isoform>
    <isoform>
        <id>Q8TED4-4</id>
        <name>4</name>
        <sequence type="described" ref="VSP_028960"/>
    </isoform>
</comment>
<comment type="tissue specificity">
    <text evidence="3">Detected in intestine and pancreas. Lower expression is also detected in liver and kidney.</text>
</comment>
<comment type="similarity">
    <text evidence="6">Belongs to the major facilitator superfamily. Organophosphate:Pi antiporter (OPA) (TC 2.A.1.4) family.</text>
</comment>
<comment type="sequence caution" evidence="6">
    <conflict type="erroneous initiation">
        <sequence resource="EMBL-CDS" id="BAB84926"/>
    </conflict>
    <text>Extended N-terminus.</text>
</comment>
<evidence type="ECO:0000255" key="1"/>
<evidence type="ECO:0000256" key="2">
    <source>
        <dbReference type="SAM" id="MobiDB-lite"/>
    </source>
</evidence>
<evidence type="ECO:0000269" key="3">
    <source>
    </source>
</evidence>
<evidence type="ECO:0000303" key="4">
    <source>
    </source>
</evidence>
<evidence type="ECO:0000303" key="5">
    <source>
    </source>
</evidence>
<evidence type="ECO:0000305" key="6"/>
<evidence type="ECO:0000305" key="7">
    <source>
    </source>
</evidence>
<evidence type="ECO:0000312" key="8">
    <source>
        <dbReference type="HGNC" id="HGNC:20644"/>
    </source>
</evidence>
<proteinExistence type="evidence at protein level"/>
<accession>Q8TED4</accession>
<accession>A8K2P9</accession>
<accession>Q6P599</accession>
<accession>Q7Z7P8</accession>
<accession>Q8TEM2</accession>
<reference key="1">
    <citation type="journal article" date="2003" name="DNA Res.">
        <title>Characterization of long cDNA clones from human adult spleen. II. The complete sequences of 81 cDNA clones.</title>
        <authorList>
            <person name="Jikuya H."/>
            <person name="Takano J."/>
            <person name="Kikuno R."/>
            <person name="Hirosawa M."/>
            <person name="Nagase T."/>
            <person name="Nomura N."/>
            <person name="Ohara O."/>
        </authorList>
    </citation>
    <scope>NUCLEOTIDE SEQUENCE [LARGE SCALE MRNA] (ISOFORM 3)</scope>
    <source>
        <tissue>Spleen</tissue>
    </source>
</reference>
<reference key="2">
    <citation type="journal article" date="2004" name="Nat. Genet.">
        <title>Complete sequencing and characterization of 21,243 full-length human cDNAs.</title>
        <authorList>
            <person name="Ota T."/>
            <person name="Suzuki Y."/>
            <person name="Nishikawa T."/>
            <person name="Otsuki T."/>
            <person name="Sugiyama T."/>
            <person name="Irie R."/>
            <person name="Wakamatsu A."/>
            <person name="Hayashi K."/>
            <person name="Sato H."/>
            <person name="Nagai K."/>
            <person name="Kimura K."/>
            <person name="Makita H."/>
            <person name="Sekine M."/>
            <person name="Obayashi M."/>
            <person name="Nishi T."/>
            <person name="Shibahara T."/>
            <person name="Tanaka T."/>
            <person name="Ishii S."/>
            <person name="Yamamoto J."/>
            <person name="Saito K."/>
            <person name="Kawai Y."/>
            <person name="Isono Y."/>
            <person name="Nakamura Y."/>
            <person name="Nagahari K."/>
            <person name="Murakami K."/>
            <person name="Yasuda T."/>
            <person name="Iwayanagi T."/>
            <person name="Wagatsuma M."/>
            <person name="Shiratori A."/>
            <person name="Sudo H."/>
            <person name="Hosoiri T."/>
            <person name="Kaku Y."/>
            <person name="Kodaira H."/>
            <person name="Kondo H."/>
            <person name="Sugawara M."/>
            <person name="Takahashi M."/>
            <person name="Kanda K."/>
            <person name="Yokoi T."/>
            <person name="Furuya T."/>
            <person name="Kikkawa E."/>
            <person name="Omura Y."/>
            <person name="Abe K."/>
            <person name="Kamihara K."/>
            <person name="Katsuta N."/>
            <person name="Sato K."/>
            <person name="Tanikawa M."/>
            <person name="Yamazaki M."/>
            <person name="Ninomiya K."/>
            <person name="Ishibashi T."/>
            <person name="Yamashita H."/>
            <person name="Murakawa K."/>
            <person name="Fujimori K."/>
            <person name="Tanai H."/>
            <person name="Kimata M."/>
            <person name="Watanabe M."/>
            <person name="Hiraoka S."/>
            <person name="Chiba Y."/>
            <person name="Ishida S."/>
            <person name="Ono Y."/>
            <person name="Takiguchi S."/>
            <person name="Watanabe S."/>
            <person name="Yosida M."/>
            <person name="Hotuta T."/>
            <person name="Kusano J."/>
            <person name="Kanehori K."/>
            <person name="Takahashi-Fujii A."/>
            <person name="Hara H."/>
            <person name="Tanase T.-O."/>
            <person name="Nomura Y."/>
            <person name="Togiya S."/>
            <person name="Komai F."/>
            <person name="Hara R."/>
            <person name="Takeuchi K."/>
            <person name="Arita M."/>
            <person name="Imose N."/>
            <person name="Musashino K."/>
            <person name="Yuuki H."/>
            <person name="Oshima A."/>
            <person name="Sasaki N."/>
            <person name="Aotsuka S."/>
            <person name="Yoshikawa Y."/>
            <person name="Matsunawa H."/>
            <person name="Ichihara T."/>
            <person name="Shiohata N."/>
            <person name="Sano S."/>
            <person name="Moriya S."/>
            <person name="Momiyama H."/>
            <person name="Satoh N."/>
            <person name="Takami S."/>
            <person name="Terashima Y."/>
            <person name="Suzuki O."/>
            <person name="Nakagawa S."/>
            <person name="Senoh A."/>
            <person name="Mizoguchi H."/>
            <person name="Goto Y."/>
            <person name="Shimizu F."/>
            <person name="Wakebe H."/>
            <person name="Hishigaki H."/>
            <person name="Watanabe T."/>
            <person name="Sugiyama A."/>
            <person name="Takemoto M."/>
            <person name="Kawakami B."/>
            <person name="Yamazaki M."/>
            <person name="Watanabe K."/>
            <person name="Kumagai A."/>
            <person name="Itakura S."/>
            <person name="Fukuzumi Y."/>
            <person name="Fujimori Y."/>
            <person name="Komiyama M."/>
            <person name="Tashiro H."/>
            <person name="Tanigami A."/>
            <person name="Fujiwara T."/>
            <person name="Ono T."/>
            <person name="Yamada K."/>
            <person name="Fujii Y."/>
            <person name="Ozaki K."/>
            <person name="Hirao M."/>
            <person name="Ohmori Y."/>
            <person name="Kawabata A."/>
            <person name="Hikiji T."/>
            <person name="Kobatake N."/>
            <person name="Inagaki H."/>
            <person name="Ikema Y."/>
            <person name="Okamoto S."/>
            <person name="Okitani R."/>
            <person name="Kawakami T."/>
            <person name="Noguchi S."/>
            <person name="Itoh T."/>
            <person name="Shigeta K."/>
            <person name="Senba T."/>
            <person name="Matsumura K."/>
            <person name="Nakajima Y."/>
            <person name="Mizuno T."/>
            <person name="Morinaga M."/>
            <person name="Sasaki M."/>
            <person name="Togashi T."/>
            <person name="Oyama M."/>
            <person name="Hata H."/>
            <person name="Watanabe M."/>
            <person name="Komatsu T."/>
            <person name="Mizushima-Sugano J."/>
            <person name="Satoh T."/>
            <person name="Shirai Y."/>
            <person name="Takahashi Y."/>
            <person name="Nakagawa K."/>
            <person name="Okumura K."/>
            <person name="Nagase T."/>
            <person name="Nomura N."/>
            <person name="Kikuchi H."/>
            <person name="Masuho Y."/>
            <person name="Yamashita R."/>
            <person name="Nakai K."/>
            <person name="Yada T."/>
            <person name="Nakamura Y."/>
            <person name="Ohara O."/>
            <person name="Isogai T."/>
            <person name="Sugano S."/>
        </authorList>
    </citation>
    <scope>NUCLEOTIDE SEQUENCE [LARGE SCALE MRNA] (ISOFORM 1)</scope>
    <source>
        <tissue>Adipose tissue</tissue>
        <tissue>Tongue</tissue>
    </source>
</reference>
<reference key="3">
    <citation type="submission" date="2005-07" db="EMBL/GenBank/DDBJ databases">
        <authorList>
            <person name="Mural R.J."/>
            <person name="Istrail S."/>
            <person name="Sutton G.G."/>
            <person name="Florea L."/>
            <person name="Halpern A.L."/>
            <person name="Mobarry C.M."/>
            <person name="Lippert R."/>
            <person name="Walenz B."/>
            <person name="Shatkay H."/>
            <person name="Dew I."/>
            <person name="Miller J.R."/>
            <person name="Flanigan M.J."/>
            <person name="Edwards N.J."/>
            <person name="Bolanos R."/>
            <person name="Fasulo D."/>
            <person name="Halldorsson B.V."/>
            <person name="Hannenhalli S."/>
            <person name="Turner R."/>
            <person name="Yooseph S."/>
            <person name="Lu F."/>
            <person name="Nusskern D.R."/>
            <person name="Shue B.C."/>
            <person name="Zheng X.H."/>
            <person name="Zhong F."/>
            <person name="Delcher A.L."/>
            <person name="Huson D.H."/>
            <person name="Kravitz S.A."/>
            <person name="Mouchard L."/>
            <person name="Reinert K."/>
            <person name="Remington K.A."/>
            <person name="Clark A.G."/>
            <person name="Waterman M.S."/>
            <person name="Eichler E.E."/>
            <person name="Adams M.D."/>
            <person name="Hunkapiller M.W."/>
            <person name="Myers E.W."/>
            <person name="Venter J.C."/>
        </authorList>
    </citation>
    <scope>NUCLEOTIDE SEQUENCE [LARGE SCALE GENOMIC DNA]</scope>
</reference>
<reference key="4">
    <citation type="journal article" date="2004" name="Genome Res.">
        <title>The status, quality, and expansion of the NIH full-length cDNA project: the Mammalian Gene Collection (MGC).</title>
        <authorList>
            <consortium name="The MGC Project Team"/>
        </authorList>
    </citation>
    <scope>NUCLEOTIDE SEQUENCE [LARGE SCALE MRNA] (ISOFORMS 2 AND 4)</scope>
    <source>
        <tissue>Brain</tissue>
        <tissue>Pancreas</tissue>
    </source>
</reference>
<reference key="5">
    <citation type="journal article" date="2011" name="PLoS ONE">
        <title>SLC37A1 and SLC37A2 are phosphate-linked, glucose-6-phosphate antiporters.</title>
        <authorList>
            <person name="Pan C.J."/>
            <person name="Chen S.Y."/>
            <person name="Jun H.S."/>
            <person name="Lin S.R."/>
            <person name="Mansfield B.C."/>
            <person name="Chou J.Y."/>
        </authorList>
    </citation>
    <scope>FUNCTION</scope>
    <scope>SUBCELLULAR LOCATION</scope>
    <scope>ACTIVITY REGULATION</scope>
    <scope>TISSUE SPECIFICITY</scope>
    <scope>TRANSPORTER ACTIVITY</scope>
</reference>
<dbReference type="EMBL" id="AK074100">
    <property type="protein sequence ID" value="BAB84926.1"/>
    <property type="status" value="ALT_INIT"/>
    <property type="molecule type" value="mRNA"/>
</dbReference>
<dbReference type="EMBL" id="AK074207">
    <property type="protein sequence ID" value="BAB85016.1"/>
    <property type="molecule type" value="mRNA"/>
</dbReference>
<dbReference type="EMBL" id="AK290314">
    <property type="protein sequence ID" value="BAF83003.1"/>
    <property type="molecule type" value="mRNA"/>
</dbReference>
<dbReference type="EMBL" id="CH471065">
    <property type="protein sequence ID" value="EAW67622.1"/>
    <property type="molecule type" value="Genomic_DNA"/>
</dbReference>
<dbReference type="EMBL" id="BC051314">
    <property type="protein sequence ID" value="AAH51314.1"/>
    <property type="molecule type" value="mRNA"/>
</dbReference>
<dbReference type="EMBL" id="BC062990">
    <property type="protein sequence ID" value="AAH62990.1"/>
    <property type="molecule type" value="mRNA"/>
</dbReference>
<dbReference type="CCDS" id="CCDS31714.1">
    <molecule id="Q8TED4-2"/>
</dbReference>
<dbReference type="CCDS" id="CCDS44757.1">
    <molecule id="Q8TED4-1"/>
</dbReference>
<dbReference type="RefSeq" id="NP_001138762.1">
    <molecule id="Q8TED4-1"/>
    <property type="nucleotide sequence ID" value="NM_001145290.2"/>
</dbReference>
<dbReference type="RefSeq" id="NP_938018.1">
    <molecule id="Q8TED4-2"/>
    <property type="nucleotide sequence ID" value="NM_198277.3"/>
</dbReference>
<dbReference type="RefSeq" id="XP_047282500.1">
    <molecule id="Q8TED4-3"/>
    <property type="nucleotide sequence ID" value="XM_047426544.1"/>
</dbReference>
<dbReference type="SMR" id="Q8TED4"/>
<dbReference type="BioGRID" id="128584">
    <property type="interactions" value="4"/>
</dbReference>
<dbReference type="FunCoup" id="Q8TED4">
    <property type="interactions" value="194"/>
</dbReference>
<dbReference type="IntAct" id="Q8TED4">
    <property type="interactions" value="1"/>
</dbReference>
<dbReference type="STRING" id="9606.ENSP00000311833"/>
<dbReference type="TCDB" id="2.A.1.4.8">
    <property type="family name" value="the major facilitator superfamily (mfs)"/>
</dbReference>
<dbReference type="GlyCosmos" id="Q8TED4">
    <property type="glycosylation" value="3 sites, No reported glycans"/>
</dbReference>
<dbReference type="GlyGen" id="Q8TED4">
    <property type="glycosylation" value="3 sites"/>
</dbReference>
<dbReference type="iPTMnet" id="Q8TED4"/>
<dbReference type="PhosphoSitePlus" id="Q8TED4"/>
<dbReference type="BioMuta" id="SLC37A2"/>
<dbReference type="DMDM" id="160185473"/>
<dbReference type="jPOST" id="Q8TED4"/>
<dbReference type="MassIVE" id="Q8TED4"/>
<dbReference type="PaxDb" id="9606-ENSP00000311833"/>
<dbReference type="PeptideAtlas" id="Q8TED4"/>
<dbReference type="ProteomicsDB" id="74448">
    <molecule id="Q8TED4-1"/>
</dbReference>
<dbReference type="ProteomicsDB" id="74449">
    <molecule id="Q8TED4-2"/>
</dbReference>
<dbReference type="ProteomicsDB" id="74450">
    <molecule id="Q8TED4-3"/>
</dbReference>
<dbReference type="Antibodypedia" id="19052">
    <property type="antibodies" value="110 antibodies from 27 providers"/>
</dbReference>
<dbReference type="DNASU" id="219855"/>
<dbReference type="Ensembl" id="ENST00000308074.4">
    <molecule id="Q8TED4-2"/>
    <property type="protein sequence ID" value="ENSP00000311833.4"/>
    <property type="gene ID" value="ENSG00000134955.12"/>
</dbReference>
<dbReference type="Ensembl" id="ENST00000403796.7">
    <molecule id="Q8TED4-1"/>
    <property type="protein sequence ID" value="ENSP00000384407.3"/>
    <property type="gene ID" value="ENSG00000134955.12"/>
</dbReference>
<dbReference type="GeneID" id="219855"/>
<dbReference type="KEGG" id="hsa:219855"/>
<dbReference type="MANE-Select" id="ENST00000403796.7">
    <property type="protein sequence ID" value="ENSP00000384407.3"/>
    <property type="RefSeq nucleotide sequence ID" value="NM_001145290.2"/>
    <property type="RefSeq protein sequence ID" value="NP_001138762.1"/>
</dbReference>
<dbReference type="UCSC" id="uc001qbn.4">
    <molecule id="Q8TED4-1"/>
    <property type="organism name" value="human"/>
</dbReference>
<dbReference type="AGR" id="HGNC:20644"/>
<dbReference type="CTD" id="219855"/>
<dbReference type="DisGeNET" id="219855"/>
<dbReference type="GeneCards" id="SLC37A2"/>
<dbReference type="HGNC" id="HGNC:20644">
    <property type="gene designation" value="SLC37A2"/>
</dbReference>
<dbReference type="HPA" id="ENSG00000134955">
    <property type="expression patterns" value="Tissue enhanced (salivary)"/>
</dbReference>
<dbReference type="MIM" id="619136">
    <property type="type" value="gene"/>
</dbReference>
<dbReference type="neXtProt" id="NX_Q8TED4"/>
<dbReference type="OpenTargets" id="ENSG00000134955"/>
<dbReference type="PharmGKB" id="PA134917577"/>
<dbReference type="VEuPathDB" id="HostDB:ENSG00000134955"/>
<dbReference type="eggNOG" id="KOG2533">
    <property type="taxonomic scope" value="Eukaryota"/>
</dbReference>
<dbReference type="GeneTree" id="ENSGT00940000158657"/>
<dbReference type="HOGENOM" id="CLU_001265_31_6_1"/>
<dbReference type="InParanoid" id="Q8TED4"/>
<dbReference type="OMA" id="AMPYLID"/>
<dbReference type="OrthoDB" id="3639251at2759"/>
<dbReference type="PAN-GO" id="Q8TED4">
    <property type="GO annotations" value="4 GO annotations based on evolutionary models"/>
</dbReference>
<dbReference type="PhylomeDB" id="Q8TED4"/>
<dbReference type="TreeFam" id="TF314991"/>
<dbReference type="PathwayCommons" id="Q8TED4"/>
<dbReference type="Reactome" id="R-HSA-70263">
    <molecule id="Q8TED4-2"/>
    <property type="pathway name" value="Gluconeogenesis"/>
</dbReference>
<dbReference type="BioGRID-ORCS" id="219855">
    <property type="hits" value="15 hits in 1155 CRISPR screens"/>
</dbReference>
<dbReference type="ChiTaRS" id="SLC37A2">
    <property type="organism name" value="human"/>
</dbReference>
<dbReference type="GenomeRNAi" id="219855"/>
<dbReference type="Pharos" id="Q8TED4">
    <property type="development level" value="Tbio"/>
</dbReference>
<dbReference type="PRO" id="PR:Q8TED4"/>
<dbReference type="Proteomes" id="UP000005640">
    <property type="component" value="Chromosome 11"/>
</dbReference>
<dbReference type="RNAct" id="Q8TED4">
    <property type="molecule type" value="protein"/>
</dbReference>
<dbReference type="Bgee" id="ENSG00000134955">
    <property type="expression patterns" value="Expressed in right adrenal gland and 157 other cell types or tissues"/>
</dbReference>
<dbReference type="ExpressionAtlas" id="Q8TED4">
    <property type="expression patterns" value="baseline and differential"/>
</dbReference>
<dbReference type="GO" id="GO:0005789">
    <property type="term" value="C:endoplasmic reticulum membrane"/>
    <property type="evidence" value="ECO:0000314"/>
    <property type="project" value="UniProtKB"/>
</dbReference>
<dbReference type="GO" id="GO:0070062">
    <property type="term" value="C:extracellular exosome"/>
    <property type="evidence" value="ECO:0007005"/>
    <property type="project" value="UniProtKB"/>
</dbReference>
<dbReference type="GO" id="GO:0061513">
    <property type="term" value="F:glucose 6-phosphate:phosphate antiporter activity"/>
    <property type="evidence" value="ECO:0000314"/>
    <property type="project" value="UniProtKB"/>
</dbReference>
<dbReference type="GO" id="GO:0015760">
    <property type="term" value="P:glucose-6-phosphate transport"/>
    <property type="evidence" value="ECO:0000314"/>
    <property type="project" value="UniProtKB"/>
</dbReference>
<dbReference type="GO" id="GO:0035435">
    <property type="term" value="P:phosphate ion transmembrane transport"/>
    <property type="evidence" value="ECO:0000314"/>
    <property type="project" value="UniProtKB"/>
</dbReference>
<dbReference type="CDD" id="cd17344">
    <property type="entry name" value="MFS_SLC37A1_2"/>
    <property type="match status" value="1"/>
</dbReference>
<dbReference type="FunFam" id="1.20.1250.20:FF:000050">
    <property type="entry name" value="glucose-6-phosphate exchanger SLC37A2 isoform X1"/>
    <property type="match status" value="1"/>
</dbReference>
<dbReference type="FunFam" id="1.20.1250.20:FF:000028">
    <property type="entry name" value="Sugar phosphate exchanger 3 isoform 1"/>
    <property type="match status" value="1"/>
</dbReference>
<dbReference type="Gene3D" id="1.20.1250.20">
    <property type="entry name" value="MFS general substrate transporter like domains"/>
    <property type="match status" value="2"/>
</dbReference>
<dbReference type="InterPro" id="IPR011701">
    <property type="entry name" value="MFS"/>
</dbReference>
<dbReference type="InterPro" id="IPR020846">
    <property type="entry name" value="MFS_dom"/>
</dbReference>
<dbReference type="InterPro" id="IPR036259">
    <property type="entry name" value="MFS_trans_sf"/>
</dbReference>
<dbReference type="InterPro" id="IPR044740">
    <property type="entry name" value="SLC37A1_2"/>
</dbReference>
<dbReference type="InterPro" id="IPR000849">
    <property type="entry name" value="Sugar_P_transporter"/>
</dbReference>
<dbReference type="PANTHER" id="PTHR43184:SF9">
    <property type="entry name" value="GLUCOSE-6-PHOSPHATE EXCHANGER SLC37A2"/>
    <property type="match status" value="1"/>
</dbReference>
<dbReference type="PANTHER" id="PTHR43184">
    <property type="entry name" value="MAJOR FACILITATOR SUPERFAMILY TRANSPORTER 16, ISOFORM B"/>
    <property type="match status" value="1"/>
</dbReference>
<dbReference type="Pfam" id="PF07690">
    <property type="entry name" value="MFS_1"/>
    <property type="match status" value="1"/>
</dbReference>
<dbReference type="PIRSF" id="PIRSF002808">
    <property type="entry name" value="Hexose_phosphate_transp"/>
    <property type="match status" value="1"/>
</dbReference>
<dbReference type="SUPFAM" id="SSF103473">
    <property type="entry name" value="MFS general substrate transporter"/>
    <property type="match status" value="1"/>
</dbReference>
<dbReference type="PROSITE" id="PS50850">
    <property type="entry name" value="MFS"/>
    <property type="match status" value="1"/>
</dbReference>
<feature type="chain" id="PRO_0000308322" description="Glucose-6-phosphate exchanger SLC37A2">
    <location>
        <begin position="1"/>
        <end position="501"/>
    </location>
</feature>
<feature type="transmembrane region" description="Helical" evidence="1">
    <location>
        <begin position="19"/>
        <end position="39"/>
    </location>
</feature>
<feature type="transmembrane region" description="Helical" evidence="1">
    <location>
        <begin position="88"/>
        <end position="108"/>
    </location>
</feature>
<feature type="transmembrane region" description="Helical" evidence="1">
    <location>
        <begin position="118"/>
        <end position="138"/>
    </location>
</feature>
<feature type="transmembrane region" description="Helical" evidence="1">
    <location>
        <begin position="145"/>
        <end position="165"/>
    </location>
</feature>
<feature type="transmembrane region" description="Helical" evidence="1">
    <location>
        <begin position="189"/>
        <end position="209"/>
    </location>
</feature>
<feature type="transmembrane region" description="Helical" evidence="1">
    <location>
        <begin position="210"/>
        <end position="230"/>
    </location>
</feature>
<feature type="transmembrane region" description="Helical" evidence="1">
    <location>
        <begin position="302"/>
        <end position="322"/>
    </location>
</feature>
<feature type="transmembrane region" description="Helical" evidence="1">
    <location>
        <begin position="334"/>
        <end position="354"/>
    </location>
</feature>
<feature type="transmembrane region" description="Helical" evidence="1">
    <location>
        <begin position="362"/>
        <end position="382"/>
    </location>
</feature>
<feature type="transmembrane region" description="Helical" evidence="1">
    <location>
        <begin position="391"/>
        <end position="411"/>
    </location>
</feature>
<feature type="transmembrane region" description="Helical" evidence="1">
    <location>
        <begin position="434"/>
        <end position="454"/>
    </location>
</feature>
<feature type="transmembrane region" description="Helical" evidence="1">
    <location>
        <begin position="462"/>
        <end position="482"/>
    </location>
</feature>
<feature type="region of interest" description="Disordered" evidence="2">
    <location>
        <begin position="240"/>
        <end position="262"/>
    </location>
</feature>
<feature type="glycosylation site" description="N-linked (GlcNAc...) asparagine" evidence="1">
    <location>
        <position position="53"/>
    </location>
</feature>
<feature type="glycosylation site" description="N-linked (GlcNAc...) asparagine" evidence="1">
    <location>
        <position position="62"/>
    </location>
</feature>
<feature type="glycosylation site" description="N-linked (GlcNAc...) asparagine" evidence="1">
    <location>
        <position position="68"/>
    </location>
</feature>
<feature type="splice variant" id="VSP_028960" description="In isoform 4." evidence="5">
    <location>
        <begin position="1"/>
        <end position="375"/>
    </location>
</feature>
<feature type="splice variant" id="VSP_028961" description="In isoform 3." evidence="4">
    <original>GGIVAGLVSDYTNGRATTCCVMLILAAPMMFLYNYIGQD</original>
    <variation>DVPVQLHWPGRDCQLHSDADHLWGPGQWPIRAHHHCCLC</variation>
    <location>
        <begin position="347"/>
        <end position="385"/>
    </location>
</feature>
<feature type="splice variant" id="VSP_028962" description="In isoform 3." evidence="4">
    <location>
        <begin position="386"/>
        <end position="501"/>
    </location>
</feature>
<feature type="splice variant" id="VSP_028963" description="In isoform 2." evidence="5">
    <original>YKEI</original>
    <variation>SSMVLTHQ</variation>
    <location>
        <begin position="498"/>
        <end position="501"/>
    </location>
</feature>
<feature type="sequence variant" id="VAR_061803" description="In dbSNP:rs55752830.">
    <original>I</original>
    <variation>V</variation>
    <location>
        <position position="96"/>
    </location>
</feature>
<feature type="sequence variant" id="VAR_036794" description="In dbSNP:rs34485243.">
    <original>G</original>
    <variation>S</variation>
    <location>
        <position position="268"/>
    </location>
</feature>
<feature type="sequence conflict" description="In Ref. 2; BAB85016." evidence="6" ref="2">
    <original>W</original>
    <variation>R</variation>
    <location>
        <position position="207"/>
    </location>
</feature>
<keyword id="KW-0025">Alternative splicing</keyword>
<keyword id="KW-0050">Antiport</keyword>
<keyword id="KW-0256">Endoplasmic reticulum</keyword>
<keyword id="KW-0325">Glycoprotein</keyword>
<keyword id="KW-0472">Membrane</keyword>
<keyword id="KW-1267">Proteomics identification</keyword>
<keyword id="KW-1185">Reference proteome</keyword>
<keyword id="KW-0762">Sugar transport</keyword>
<keyword id="KW-0812">Transmembrane</keyword>
<keyword id="KW-1133">Transmembrane helix</keyword>
<keyword id="KW-0813">Transport</keyword>
<name>G6PT3_HUMAN</name>
<organism>
    <name type="scientific">Homo sapiens</name>
    <name type="common">Human</name>
    <dbReference type="NCBI Taxonomy" id="9606"/>
    <lineage>
        <taxon>Eukaryota</taxon>
        <taxon>Metazoa</taxon>
        <taxon>Chordata</taxon>
        <taxon>Craniata</taxon>
        <taxon>Vertebrata</taxon>
        <taxon>Euteleostomi</taxon>
        <taxon>Mammalia</taxon>
        <taxon>Eutheria</taxon>
        <taxon>Euarchontoglires</taxon>
        <taxon>Primates</taxon>
        <taxon>Haplorrhini</taxon>
        <taxon>Catarrhini</taxon>
        <taxon>Hominidae</taxon>
        <taxon>Homo</taxon>
    </lineage>
</organism>
<protein>
    <recommendedName>
        <fullName evidence="7">Glucose-6-phosphate exchanger SLC37A2</fullName>
    </recommendedName>
    <alternativeName>
        <fullName evidence="8">Solute carrier family 37 member 2</fullName>
    </alternativeName>
</protein>
<gene>
    <name evidence="8" type="primary">SLC37A2</name>
</gene>